<protein>
    <recommendedName>
        <fullName evidence="6">Eukaryotic translation initiation factor isoform 4E</fullName>
        <shortName evidence="6">PeaeIF(iso)4E</shortName>
        <shortName evidence="6">eIF(iso)-4E</shortName>
    </recommendedName>
    <alternativeName>
        <fullName evidence="7">eIF-(iso)4F 25 kDa subunit</fullName>
    </alternativeName>
    <alternativeName>
        <fullName evidence="7">eIF-(iso)4F p28 subunit</fullName>
    </alternativeName>
    <alternativeName>
        <fullName evidence="7">mRNA cap-binding protein</fullName>
    </alternativeName>
</protein>
<organism>
    <name type="scientific">Arachis hypogaea</name>
    <name type="common">Peanut</name>
    <dbReference type="NCBI Taxonomy" id="3818"/>
    <lineage>
        <taxon>Eukaryota</taxon>
        <taxon>Viridiplantae</taxon>
        <taxon>Streptophyta</taxon>
        <taxon>Embryophyta</taxon>
        <taxon>Tracheophyta</taxon>
        <taxon>Spermatophyta</taxon>
        <taxon>Magnoliopsida</taxon>
        <taxon>eudicotyledons</taxon>
        <taxon>Gunneridae</taxon>
        <taxon>Pentapetalae</taxon>
        <taxon>rosids</taxon>
        <taxon>fabids</taxon>
        <taxon>Fabales</taxon>
        <taxon>Fabaceae</taxon>
        <taxon>Papilionoideae</taxon>
        <taxon>50 kb inversion clade</taxon>
        <taxon>dalbergioids sensu lato</taxon>
        <taxon>Dalbergieae</taxon>
        <taxon>Pterocarpus clade</taxon>
        <taxon>Arachis</taxon>
    </lineage>
</organism>
<dbReference type="EMBL" id="KF956378">
    <property type="protein sequence ID" value="AHK23094.1"/>
    <property type="molecule type" value="mRNA"/>
</dbReference>
<dbReference type="EMBL" id="SDMP01000012">
    <property type="protein sequence ID" value="RYR25631.1"/>
    <property type="molecule type" value="Genomic_DNA"/>
</dbReference>
<dbReference type="SMR" id="A0A445AGS0"/>
<dbReference type="STRING" id="3818.A0A445AGS0"/>
<dbReference type="EnsemblPlants" id="arahy.Tifrunner.gnm2.ann2.Ah12g201100.1">
    <property type="protein sequence ID" value="arahy.Tifrunner.gnm2.ann2.Ah12g201100.1-CDS"/>
    <property type="gene ID" value="arahy.Tifrunner.gnm2.ann2.Ah12g201100"/>
</dbReference>
<dbReference type="Gramene" id="arahy.Tifrunner.gnm2.ann2.Ah12g201100.1">
    <property type="protein sequence ID" value="arahy.Tifrunner.gnm2.ann2.Ah12g201100.1-CDS"/>
    <property type="gene ID" value="arahy.Tifrunner.gnm2.ann2.Ah12g201100"/>
</dbReference>
<dbReference type="OrthoDB" id="590761at2759"/>
<dbReference type="Proteomes" id="UP000289738">
    <property type="component" value="Chromosome B02"/>
</dbReference>
<dbReference type="GO" id="GO:0005737">
    <property type="term" value="C:cytoplasm"/>
    <property type="evidence" value="ECO:0000314"/>
    <property type="project" value="UniProtKB"/>
</dbReference>
<dbReference type="GO" id="GO:0016281">
    <property type="term" value="C:eukaryotic translation initiation factor 4F complex"/>
    <property type="evidence" value="ECO:0007669"/>
    <property type="project" value="TreeGrafter"/>
</dbReference>
<dbReference type="GO" id="GO:0005634">
    <property type="term" value="C:nucleus"/>
    <property type="evidence" value="ECO:0000314"/>
    <property type="project" value="UniProtKB"/>
</dbReference>
<dbReference type="GO" id="GO:0000340">
    <property type="term" value="F:RNA 7-methylguanosine cap binding"/>
    <property type="evidence" value="ECO:0007669"/>
    <property type="project" value="TreeGrafter"/>
</dbReference>
<dbReference type="GO" id="GO:0003743">
    <property type="term" value="F:translation initiation factor activity"/>
    <property type="evidence" value="ECO:0007669"/>
    <property type="project" value="UniProtKB-KW"/>
</dbReference>
<dbReference type="GO" id="GO:0051607">
    <property type="term" value="P:defense response to virus"/>
    <property type="evidence" value="ECO:0000315"/>
    <property type="project" value="UniProtKB"/>
</dbReference>
<dbReference type="GO" id="GO:0006417">
    <property type="term" value="P:regulation of translation"/>
    <property type="evidence" value="ECO:0007669"/>
    <property type="project" value="UniProtKB-KW"/>
</dbReference>
<dbReference type="FunFam" id="3.30.760.10:FF:000003">
    <property type="entry name" value="Eukaryotic translation initiation factor 4E"/>
    <property type="match status" value="1"/>
</dbReference>
<dbReference type="Gene3D" id="3.30.760.10">
    <property type="entry name" value="RNA Cap, Translation Initiation Factor Eif4e"/>
    <property type="match status" value="1"/>
</dbReference>
<dbReference type="InterPro" id="IPR023398">
    <property type="entry name" value="TIF_eIF4e-like"/>
</dbReference>
<dbReference type="InterPro" id="IPR001040">
    <property type="entry name" value="TIF_eIF_4E"/>
</dbReference>
<dbReference type="InterPro" id="IPR019770">
    <property type="entry name" value="TIF_eIF_4E_CS"/>
</dbReference>
<dbReference type="PANTHER" id="PTHR11960">
    <property type="entry name" value="EUKARYOTIC TRANSLATION INITIATION FACTOR 4E RELATED"/>
    <property type="match status" value="1"/>
</dbReference>
<dbReference type="PANTHER" id="PTHR11960:SF60">
    <property type="entry name" value="EUKARYOTIC TRANSLATION INITIATION FACTOR ISOFORM 4E-2"/>
    <property type="match status" value="1"/>
</dbReference>
<dbReference type="Pfam" id="PF01652">
    <property type="entry name" value="IF4E"/>
    <property type="match status" value="1"/>
</dbReference>
<dbReference type="SUPFAM" id="SSF55418">
    <property type="entry name" value="eIF4e-like"/>
    <property type="match status" value="1"/>
</dbReference>
<dbReference type="PROSITE" id="PS00813">
    <property type="entry name" value="IF4E"/>
    <property type="match status" value="1"/>
</dbReference>
<gene>
    <name evidence="6" type="primary">eIF(iso)4E</name>
    <name evidence="8" type="ordered locus">Ahy_B02g059482</name>
</gene>
<accession>A0A445AGS0</accession>
<accession>W8GH57</accession>
<evidence type="ECO:0000250" key="1">
    <source>
        <dbReference type="UniProtKB" id="O04663"/>
    </source>
</evidence>
<evidence type="ECO:0000250" key="2">
    <source>
        <dbReference type="UniProtKB" id="P29557"/>
    </source>
</evidence>
<evidence type="ECO:0000250" key="3">
    <source>
        <dbReference type="UniProtKB" id="Q66WU1"/>
    </source>
</evidence>
<evidence type="ECO:0000256" key="4">
    <source>
        <dbReference type="SAM" id="MobiDB-lite"/>
    </source>
</evidence>
<evidence type="ECO:0000269" key="5">
    <source>
    </source>
</evidence>
<evidence type="ECO:0000303" key="6">
    <source ref="1"/>
</evidence>
<evidence type="ECO:0000305" key="7"/>
<evidence type="ECO:0000312" key="8">
    <source>
        <dbReference type="EMBL" id="RYR25631.1"/>
    </source>
</evidence>
<keyword id="KW-0963">Cytoplasm</keyword>
<keyword id="KW-1015">Disulfide bond</keyword>
<keyword id="KW-0945">Host-virus interaction</keyword>
<keyword id="KW-0396">Initiation factor</keyword>
<keyword id="KW-0539">Nucleus</keyword>
<keyword id="KW-0611">Plant defense</keyword>
<keyword id="KW-0648">Protein biosynthesis</keyword>
<keyword id="KW-1185">Reference proteome</keyword>
<keyword id="KW-0694">RNA-binding</keyword>
<keyword id="KW-0810">Translation regulation</keyword>
<reference key="1">
    <citation type="submission" date="2013-12" db="EMBL/GenBank/DDBJ databases">
        <authorList>
            <person name="Chi Y."/>
            <person name="Xie H."/>
            <person name="Yang J."/>
        </authorList>
    </citation>
    <scope>NUCLEOTIDE SEQUENCE [MRNA]</scope>
</reference>
<reference key="2">
    <citation type="journal article" date="2019" name="Nat. Genet.">
        <title>The genome of cultivated peanut provides insight into legume karyotypes, polyploid evolution and crop domestication.</title>
        <authorList>
            <person name="Zhuang W."/>
            <person name="Chen H."/>
            <person name="Yang M."/>
            <person name="Wang J."/>
            <person name="Pandey M.K."/>
            <person name="Zhang C."/>
            <person name="Chang W.C."/>
            <person name="Zhang L."/>
            <person name="Zhang X."/>
            <person name="Tang R."/>
            <person name="Garg V."/>
            <person name="Wang X."/>
            <person name="Tang H."/>
            <person name="Chow C.N."/>
            <person name="Wang J."/>
            <person name="Deng Y."/>
            <person name="Wang D."/>
            <person name="Khan A.W."/>
            <person name="Yang Q."/>
            <person name="Cai T."/>
            <person name="Bajaj P."/>
            <person name="Wu K."/>
            <person name="Guo B."/>
            <person name="Zhang X."/>
            <person name="Li J."/>
            <person name="Liang F."/>
            <person name="Hu J."/>
            <person name="Liao B."/>
            <person name="Liu S."/>
            <person name="Chitikineni A."/>
            <person name="Yan H."/>
            <person name="Zheng Y."/>
            <person name="Shan S."/>
            <person name="Liu Q."/>
            <person name="Xie D."/>
            <person name="Wang Z."/>
            <person name="Khan S.A."/>
            <person name="Ali N."/>
            <person name="Zhao C."/>
            <person name="Li X."/>
            <person name="Luo Z."/>
            <person name="Zhang S."/>
            <person name="Zhuang R."/>
            <person name="Peng Z."/>
            <person name="Wang S."/>
            <person name="Mamadou G."/>
            <person name="Zhuang Y."/>
            <person name="Zhao Z."/>
            <person name="Yu W."/>
            <person name="Xiong F."/>
            <person name="Quan W."/>
            <person name="Yuan M."/>
            <person name="Li Y."/>
            <person name="Zou H."/>
            <person name="Xia H."/>
            <person name="Zha L."/>
            <person name="Fan J."/>
            <person name="Yu J."/>
            <person name="Xie W."/>
            <person name="Yuan J."/>
            <person name="Chen K."/>
            <person name="Zhao S."/>
            <person name="Chu W."/>
            <person name="Chen Y."/>
            <person name="Sun P."/>
            <person name="Meng F."/>
            <person name="Zhuo T."/>
            <person name="Zhao Y."/>
            <person name="Li C."/>
            <person name="He G."/>
            <person name="Zhao Y."/>
            <person name="Wang C."/>
            <person name="Kavikishor P.B."/>
            <person name="Pan R.L."/>
            <person name="Paterson A.H."/>
            <person name="Wang X."/>
            <person name="Ming R."/>
            <person name="Varshney R.K."/>
        </authorList>
    </citation>
    <scope>NUCLEOTIDE SEQUENCE [LARGE SCALE GENOMIC DNA]</scope>
    <source>
        <strain>cv. Fuhuasheng</strain>
        <tissue>Leaf</tissue>
    </source>
</reference>
<reference key="3">
    <citation type="journal article" date="2017" name="Front. Microbiol.">
        <title>Translation Initiation Factor eIF4E and eIFiso4E are both required for peanut stripe virus infection in peanut (Arachis hypogaea L.).</title>
        <authorList>
            <person name="Xu M."/>
            <person name="Xie H."/>
            <person name="Wu J."/>
            <person name="Xie L."/>
            <person name="Yang J."/>
            <person name="Chi Y."/>
        </authorList>
    </citation>
    <scope>FUNCTION</scope>
    <scope>FUNCTION (MICROBIAL INFECTION)</scope>
    <scope>DISRUPTION PHENOTYPE</scope>
    <scope>INTERACTION WITH POTYVIRUS HC-PRO AND VPG (MICROBIAL INFECTION)</scope>
    <scope>TISSUE SPECIFICITY</scope>
    <scope>SUBCELLULAR LOCATION</scope>
    <scope>SUBCELLULAR LOCATION (MICROBIAL INFECTION)</scope>
    <source>
        <strain>cv. Huayu 20</strain>
    </source>
</reference>
<sequence>MATETAGAVVESSSAATVPSPAPEAGSKHKLERKWTFWFDNQSKPKQGAAWGTSLREVYTFDTVEEFWCLYDQVFKPSKLPGNADFHLFKTGIEPKWEDPECAKGGKWTVTSNRKANLDNMWLETMMALIGEQFDDAEDICGVVASVRQRQDKLSLWTKTAANEAAQMGIGRKWKEIIDVTDKIIYNFHDDSRTRSSKSRYSV</sequence>
<comment type="function">
    <text evidence="3 5">Component of the protein complex eIF4F, which is involved in the recognition of the mRNA cap, ATP-dependent unwinding of 5'-terminal secondary structure and recruitment of mRNA to the ribosome (By similarity). Recognizes and binds the 7-methylguanosine-containing mRNA cap during an early step in the initiation of protein synthesis and facilitates ribosome binding by inducing the unwinding of the mRNAs secondary structures (By similarity). Key component of recessive resistance to potyviruses such as peanut stripe virus (PStV) (PubMed:28344571).</text>
</comment>
<comment type="function">
    <text evidence="5">(Microbial infection) Susceptibility host factor required for viral infection by recruiting viral RNAs to the host ribosomal complex via an interaction with viral genome-linked protein (VPg).</text>
</comment>
<comment type="subunit">
    <text evidence="1">EIF4F is a multi-subunit complex, the composition of which varies with external and internal environmental conditions (By similarity). It is composed of at least EIF4A, EIF4E and EIF4G (By similarity). EIF4E is also known to interact with other partners (By similarity). In higher plants two isoforms of EIF4F have been identified, named isoform EIF4F and isoform EIF(iso)4F (By similarity). Isoform EIF4F has subunits p220 and p26, whereas isoform EIF(iso)4F has subunits p82 and p28 (By similarity).</text>
</comment>
<comment type="subunit">
    <text evidence="5">(Microbial infection) Interacts with the potyvirus peanut stripe virus (PStV) helper component proteinase (HC-Pro) in the cytoplasm and with PStV viral genome-linked protein (VPg) in the nucleus; these interactions are possible in susceptible hosts but impaired in resistant plants.</text>
</comment>
<comment type="subcellular location">
    <subcellularLocation>
        <location evidence="5">Cytoplasm</location>
    </subcellularLocation>
    <subcellularLocation>
        <location evidence="5">Nucleus</location>
    </subcellularLocation>
</comment>
<comment type="subcellular location">
    <subcellularLocation>
        <location evidence="5">Cytoplasm</location>
    </subcellularLocation>
    <subcellularLocation>
        <location evidence="5">Nucleus</location>
    </subcellularLocation>
    <text evidence="5">(Microbial infection) Binds to potyvirus viral genome-linked protein (VPg) in the nucleus and with viral helper component proteinase (HC-Pro) in the cytoplasm.</text>
</comment>
<comment type="tissue specificity">
    <text evidence="5">Expressed ubiquitously with highest levels in young leaves and roots, and lowest levels in flowers.</text>
</comment>
<comment type="PTM">
    <text evidence="2">According to the redox status, the Cys-102-Cys-141 disulfide bridge may have a role in regulating protein function by affecting its ability to bind capped mRNA.</text>
</comment>
<comment type="disruption phenotype">
    <text evidence="5">(Microbial infection) No significant resistance against peanut stripe virus (PStV) (PubMed:28344571). Plants lacking both eIF4E and eIF(iso)4E exhibit an increased resistance against PStV (PubMed:28344571).</text>
</comment>
<comment type="similarity">
    <text evidence="7">Belongs to the eukaryotic initiation factor 4E family.</text>
</comment>
<name>IFI4E_ARAHY</name>
<proteinExistence type="evidence at protein level"/>
<feature type="chain" id="PRO_0000454073" description="Eukaryotic translation initiation factor isoform 4E">
    <location>
        <begin position="1"/>
        <end position="203"/>
    </location>
</feature>
<feature type="region of interest" description="Disordered" evidence="4">
    <location>
        <begin position="1"/>
        <end position="27"/>
    </location>
</feature>
<feature type="compositionally biased region" description="Low complexity" evidence="4">
    <location>
        <begin position="1"/>
        <end position="25"/>
    </location>
</feature>
<feature type="binding site" evidence="2">
    <location>
        <begin position="47"/>
        <end position="52"/>
    </location>
    <ligand>
        <name>mRNA</name>
        <dbReference type="ChEBI" id="CHEBI:33699"/>
    </ligand>
    <ligandPart>
        <name>N(7)-methylguanosine 5'-triphosphate group</name>
        <dbReference type="ChEBI" id="CHEBI:74429"/>
        <note>m7GTP residue in mRNA cap</note>
    </ligandPart>
</feature>
<feature type="binding site" evidence="2">
    <location>
        <position position="79"/>
    </location>
    <ligand>
        <name>mRNA</name>
        <dbReference type="ChEBI" id="CHEBI:33699"/>
    </ligand>
    <ligandPart>
        <name>N(7)-methylguanosine 5'-triphosphate group</name>
        <dbReference type="ChEBI" id="CHEBI:74429"/>
        <note>m7GTP residue in mRNA cap</note>
    </ligandPart>
</feature>
<feature type="binding site" evidence="2">
    <location>
        <begin position="97"/>
        <end position="98"/>
    </location>
    <ligand>
        <name>mRNA</name>
        <dbReference type="ChEBI" id="CHEBI:33699"/>
    </ligand>
    <ligandPart>
        <name>N(7)-methylguanosine 5'-triphosphate group</name>
        <dbReference type="ChEBI" id="CHEBI:74429"/>
        <note>m7GTP residue in mRNA cap</note>
    </ligandPart>
</feature>
<feature type="binding site" evidence="2">
    <location>
        <begin position="148"/>
        <end position="153"/>
    </location>
    <ligand>
        <name>mRNA</name>
        <dbReference type="ChEBI" id="CHEBI:33699"/>
    </ligand>
    <ligandPart>
        <name>N(7)-methylguanosine 5'-triphosphate group</name>
        <dbReference type="ChEBI" id="CHEBI:74429"/>
        <note>m7GTP residue in mRNA cap</note>
    </ligandPart>
</feature>
<feature type="disulfide bond" evidence="2">
    <location>
        <begin position="102"/>
        <end position="141"/>
    </location>
</feature>
<feature type="sequence conflict" description="In Ref. 1; AHK23094." evidence="7" ref="1">
    <original>AQ</original>
    <variation>TH</variation>
    <location>
        <begin position="166"/>
        <end position="167"/>
    </location>
</feature>